<proteinExistence type="inferred from homology"/>
<comment type="function">
    <text evidence="1">Catalyzes the isomerization between 2-isopropylmalate and 3-isopropylmalate, via the formation of 2-isopropylmaleate.</text>
</comment>
<comment type="catalytic activity">
    <reaction evidence="1">
        <text>(2R,3S)-3-isopropylmalate = (2S)-2-isopropylmalate</text>
        <dbReference type="Rhea" id="RHEA:32287"/>
        <dbReference type="ChEBI" id="CHEBI:1178"/>
        <dbReference type="ChEBI" id="CHEBI:35121"/>
        <dbReference type="EC" id="4.2.1.33"/>
    </reaction>
</comment>
<comment type="pathway">
    <text evidence="1">Amino-acid biosynthesis; L-leucine biosynthesis; L-leucine from 3-methyl-2-oxobutanoate: step 2/4.</text>
</comment>
<comment type="subunit">
    <text evidence="1">Heterodimer of LeuC and LeuD.</text>
</comment>
<comment type="similarity">
    <text evidence="1">Belongs to the LeuD family. LeuD type 1 subfamily.</text>
</comment>
<name>LEUD_STRAW</name>
<reference key="1">
    <citation type="journal article" date="2001" name="Proc. Natl. Acad. Sci. U.S.A.">
        <title>Genome sequence of an industrial microorganism Streptomyces avermitilis: deducing the ability of producing secondary metabolites.</title>
        <authorList>
            <person name="Omura S."/>
            <person name="Ikeda H."/>
            <person name="Ishikawa J."/>
            <person name="Hanamoto A."/>
            <person name="Takahashi C."/>
            <person name="Shinose M."/>
            <person name="Takahashi Y."/>
            <person name="Horikawa H."/>
            <person name="Nakazawa H."/>
            <person name="Osonoe T."/>
            <person name="Kikuchi H."/>
            <person name="Shiba T."/>
            <person name="Sakaki Y."/>
            <person name="Hattori M."/>
        </authorList>
    </citation>
    <scope>NUCLEOTIDE SEQUENCE [LARGE SCALE GENOMIC DNA]</scope>
    <source>
        <strain>ATCC 31267 / DSM 46492 / JCM 5070 / NBRC 14893 / NCIMB 12804 / NRRL 8165 / MA-4680</strain>
    </source>
</reference>
<reference key="2">
    <citation type="journal article" date="2003" name="Nat. Biotechnol.">
        <title>Complete genome sequence and comparative analysis of the industrial microorganism Streptomyces avermitilis.</title>
        <authorList>
            <person name="Ikeda H."/>
            <person name="Ishikawa J."/>
            <person name="Hanamoto A."/>
            <person name="Shinose M."/>
            <person name="Kikuchi H."/>
            <person name="Shiba T."/>
            <person name="Sakaki Y."/>
            <person name="Hattori M."/>
            <person name="Omura S."/>
        </authorList>
    </citation>
    <scope>NUCLEOTIDE SEQUENCE [LARGE SCALE GENOMIC DNA]</scope>
    <source>
        <strain>ATCC 31267 / DSM 46492 / JCM 5070 / NBRC 14893 / NCIMB 12804 / NRRL 8165 / MA-4680</strain>
    </source>
</reference>
<organism>
    <name type="scientific">Streptomyces avermitilis (strain ATCC 31267 / DSM 46492 / JCM 5070 / NBRC 14893 / NCIMB 12804 / NRRL 8165 / MA-4680)</name>
    <dbReference type="NCBI Taxonomy" id="227882"/>
    <lineage>
        <taxon>Bacteria</taxon>
        <taxon>Bacillati</taxon>
        <taxon>Actinomycetota</taxon>
        <taxon>Actinomycetes</taxon>
        <taxon>Kitasatosporales</taxon>
        <taxon>Streptomycetaceae</taxon>
        <taxon>Streptomyces</taxon>
    </lineage>
</organism>
<sequence>MEAFTTHTGRAVPLRRSNVDTDQIIPAHWLKKVTRDGFEDGLFEAWRKDESFILNRPERTGATVLVAGPDFGTGSSREHAVWALQNYGFKAVISSRFADIFRGNSLKNGLLTVVLEQKIVDALWELTEKDPQAEVTVDLEAREVRAEGITAAFELDENARWRLLNGLDDISITLQNEGDIATYEAKRPSHKPRTLQV</sequence>
<accession>Q82JR9</accession>
<keyword id="KW-0028">Amino-acid biosynthesis</keyword>
<keyword id="KW-0100">Branched-chain amino acid biosynthesis</keyword>
<keyword id="KW-0432">Leucine biosynthesis</keyword>
<keyword id="KW-0456">Lyase</keyword>
<keyword id="KW-1185">Reference proteome</keyword>
<feature type="chain" id="PRO_0000141897" description="3-isopropylmalate dehydratase small subunit">
    <location>
        <begin position="1"/>
        <end position="197"/>
    </location>
</feature>
<gene>
    <name evidence="1" type="primary">leuD</name>
    <name type="ordered locus">SAV_2685</name>
</gene>
<dbReference type="EC" id="4.2.1.33" evidence="1"/>
<dbReference type="EMBL" id="BA000030">
    <property type="protein sequence ID" value="BAC70396.1"/>
    <property type="molecule type" value="Genomic_DNA"/>
</dbReference>
<dbReference type="RefSeq" id="WP_010984117.1">
    <property type="nucleotide sequence ID" value="NZ_JZJK01000071.1"/>
</dbReference>
<dbReference type="SMR" id="Q82JR9"/>
<dbReference type="GeneID" id="41539769"/>
<dbReference type="KEGG" id="sma:SAVERM_2685"/>
<dbReference type="eggNOG" id="COG0066">
    <property type="taxonomic scope" value="Bacteria"/>
</dbReference>
<dbReference type="HOGENOM" id="CLU_081378_0_1_11"/>
<dbReference type="OrthoDB" id="9777465at2"/>
<dbReference type="UniPathway" id="UPA00048">
    <property type="reaction ID" value="UER00071"/>
</dbReference>
<dbReference type="Proteomes" id="UP000000428">
    <property type="component" value="Chromosome"/>
</dbReference>
<dbReference type="GO" id="GO:0009316">
    <property type="term" value="C:3-isopropylmalate dehydratase complex"/>
    <property type="evidence" value="ECO:0007669"/>
    <property type="project" value="InterPro"/>
</dbReference>
<dbReference type="GO" id="GO:0003861">
    <property type="term" value="F:3-isopropylmalate dehydratase activity"/>
    <property type="evidence" value="ECO:0007669"/>
    <property type="project" value="UniProtKB-UniRule"/>
</dbReference>
<dbReference type="GO" id="GO:0009098">
    <property type="term" value="P:L-leucine biosynthetic process"/>
    <property type="evidence" value="ECO:0007669"/>
    <property type="project" value="UniProtKB-UniRule"/>
</dbReference>
<dbReference type="CDD" id="cd01577">
    <property type="entry name" value="IPMI_Swivel"/>
    <property type="match status" value="1"/>
</dbReference>
<dbReference type="FunFam" id="3.20.19.10:FF:000003">
    <property type="entry name" value="3-isopropylmalate dehydratase small subunit"/>
    <property type="match status" value="1"/>
</dbReference>
<dbReference type="Gene3D" id="3.20.19.10">
    <property type="entry name" value="Aconitase, domain 4"/>
    <property type="match status" value="1"/>
</dbReference>
<dbReference type="HAMAP" id="MF_01031">
    <property type="entry name" value="LeuD_type1"/>
    <property type="match status" value="1"/>
</dbReference>
<dbReference type="InterPro" id="IPR004431">
    <property type="entry name" value="3-IsopropMal_deHydase_ssu"/>
</dbReference>
<dbReference type="InterPro" id="IPR015928">
    <property type="entry name" value="Aconitase/3IPM_dehydase_swvl"/>
</dbReference>
<dbReference type="InterPro" id="IPR000573">
    <property type="entry name" value="AconitaseA/IPMdHydase_ssu_swvl"/>
</dbReference>
<dbReference type="InterPro" id="IPR033940">
    <property type="entry name" value="IPMI_Swivel"/>
</dbReference>
<dbReference type="InterPro" id="IPR050075">
    <property type="entry name" value="LeuD"/>
</dbReference>
<dbReference type="NCBIfam" id="TIGR00171">
    <property type="entry name" value="leuD"/>
    <property type="match status" value="1"/>
</dbReference>
<dbReference type="NCBIfam" id="NF002458">
    <property type="entry name" value="PRK01641.1"/>
    <property type="match status" value="1"/>
</dbReference>
<dbReference type="PANTHER" id="PTHR43345:SF5">
    <property type="entry name" value="3-ISOPROPYLMALATE DEHYDRATASE SMALL SUBUNIT"/>
    <property type="match status" value="1"/>
</dbReference>
<dbReference type="PANTHER" id="PTHR43345">
    <property type="entry name" value="3-ISOPROPYLMALATE DEHYDRATASE SMALL SUBUNIT 2-RELATED-RELATED"/>
    <property type="match status" value="1"/>
</dbReference>
<dbReference type="Pfam" id="PF00694">
    <property type="entry name" value="Aconitase_C"/>
    <property type="match status" value="1"/>
</dbReference>
<dbReference type="SUPFAM" id="SSF52016">
    <property type="entry name" value="LeuD/IlvD-like"/>
    <property type="match status" value="1"/>
</dbReference>
<evidence type="ECO:0000255" key="1">
    <source>
        <dbReference type="HAMAP-Rule" id="MF_01031"/>
    </source>
</evidence>
<protein>
    <recommendedName>
        <fullName evidence="1">3-isopropylmalate dehydratase small subunit</fullName>
        <ecNumber evidence="1">4.2.1.33</ecNumber>
    </recommendedName>
    <alternativeName>
        <fullName evidence="1">Alpha-IPM isomerase</fullName>
        <shortName evidence="1">IPMI</shortName>
    </alternativeName>
    <alternativeName>
        <fullName evidence="1">Isopropylmalate isomerase</fullName>
    </alternativeName>
</protein>